<feature type="chain" id="PRO_0000381875" description="Polyribonucleotide nucleotidyltransferase">
    <location>
        <begin position="1"/>
        <end position="755"/>
    </location>
</feature>
<feature type="domain" description="KH" evidence="1">
    <location>
        <begin position="560"/>
        <end position="619"/>
    </location>
</feature>
<feature type="domain" description="S1 motif" evidence="1">
    <location>
        <begin position="629"/>
        <end position="698"/>
    </location>
</feature>
<feature type="region of interest" description="Disordered" evidence="2">
    <location>
        <begin position="699"/>
        <end position="755"/>
    </location>
</feature>
<feature type="compositionally biased region" description="Basic and acidic residues" evidence="2">
    <location>
        <begin position="719"/>
        <end position="755"/>
    </location>
</feature>
<feature type="binding site" evidence="1">
    <location>
        <position position="493"/>
    </location>
    <ligand>
        <name>Mg(2+)</name>
        <dbReference type="ChEBI" id="CHEBI:18420"/>
    </ligand>
</feature>
<feature type="binding site" evidence="1">
    <location>
        <position position="499"/>
    </location>
    <ligand>
        <name>Mg(2+)</name>
        <dbReference type="ChEBI" id="CHEBI:18420"/>
    </ligand>
</feature>
<keyword id="KW-0963">Cytoplasm</keyword>
<keyword id="KW-0460">Magnesium</keyword>
<keyword id="KW-0479">Metal-binding</keyword>
<keyword id="KW-0548">Nucleotidyltransferase</keyword>
<keyword id="KW-0694">RNA-binding</keyword>
<keyword id="KW-0808">Transferase</keyword>
<protein>
    <recommendedName>
        <fullName evidence="1">Polyribonucleotide nucleotidyltransferase</fullName>
        <ecNumber evidence="1">2.7.7.8</ecNumber>
    </recommendedName>
    <alternativeName>
        <fullName evidence="1">Polynucleotide phosphorylase</fullName>
        <shortName evidence="1">PNPase</shortName>
    </alternativeName>
</protein>
<comment type="function">
    <text evidence="1">Involved in mRNA degradation. Catalyzes the phosphorolysis of single-stranded polyribonucleotides processively in the 3'- to 5'-direction.</text>
</comment>
<comment type="catalytic activity">
    <reaction evidence="1">
        <text>RNA(n+1) + phosphate = RNA(n) + a ribonucleoside 5'-diphosphate</text>
        <dbReference type="Rhea" id="RHEA:22096"/>
        <dbReference type="Rhea" id="RHEA-COMP:14527"/>
        <dbReference type="Rhea" id="RHEA-COMP:17342"/>
        <dbReference type="ChEBI" id="CHEBI:43474"/>
        <dbReference type="ChEBI" id="CHEBI:57930"/>
        <dbReference type="ChEBI" id="CHEBI:140395"/>
        <dbReference type="EC" id="2.7.7.8"/>
    </reaction>
</comment>
<comment type="cofactor">
    <cofactor evidence="1">
        <name>Mg(2+)</name>
        <dbReference type="ChEBI" id="CHEBI:18420"/>
    </cofactor>
</comment>
<comment type="subcellular location">
    <subcellularLocation>
        <location evidence="1">Cytoplasm</location>
    </subcellularLocation>
</comment>
<comment type="similarity">
    <text evidence="1">Belongs to the polyribonucleotide nucleotidyltransferase family.</text>
</comment>
<reference key="1">
    <citation type="submission" date="2009-01" db="EMBL/GenBank/DDBJ databases">
        <title>Complete sequence of Chloroflexus sp. Y-400-fl.</title>
        <authorList>
            <consortium name="US DOE Joint Genome Institute"/>
            <person name="Lucas S."/>
            <person name="Copeland A."/>
            <person name="Lapidus A."/>
            <person name="Glavina del Rio T."/>
            <person name="Dalin E."/>
            <person name="Tice H."/>
            <person name="Bruce D."/>
            <person name="Goodwin L."/>
            <person name="Pitluck S."/>
            <person name="Sims D."/>
            <person name="Kiss H."/>
            <person name="Brettin T."/>
            <person name="Detter J.C."/>
            <person name="Han C."/>
            <person name="Larimer F."/>
            <person name="Land M."/>
            <person name="Hauser L."/>
            <person name="Kyrpides N."/>
            <person name="Ovchinnikova G."/>
            <person name="Bryant D.A."/>
            <person name="Richardson P."/>
        </authorList>
    </citation>
    <scope>NUCLEOTIDE SEQUENCE [LARGE SCALE GENOMIC DNA]</scope>
    <source>
        <strain>ATCC 29364 / DSM 637 / Y-400-fl</strain>
    </source>
</reference>
<sequence>MTERNIYSVSAEIAGRTLTLEAGRFAEQADGAVVARYGDTMLLATVVCAKEAREGTDFFPLTVDYEEKMYAVGKIPGNFFKREGRPTTTAILISRLTDRPLRPLFPKGFYNEVQVIITTFSIDMENDPGPLAIIAASAALCISDIPFAGPVGAVQMGHLNGQLVVNPKMNEIADSRLDLVVAGTKDAVLMVEAGAYELTEDEMLQAVIDGHAVCKQICDLQEQLVQLCGKPKRPFTPPVVDTSLEEAISAWMGDRLRKAVRSPIKQEREAQTEALKAEVIAHFTADEPEEEIANRTKEVTKAFEKLLKDEVRNAILDEGIRVDGRALDEIRPISIEVGVIPRVHGSAVFTRGQTQVLTITTLGSPGDEQKVDDLGIETSKRYIHHYNFPPFSTGEVRRIGTPRRRDIGHGALAERSLYAVLPDEKDFPYTIRLVSEVLSSNGSSSMASVCGSSLSLMDAGVPIKAPVAGVAMGLITGEDGRWRVLTDIQGLEDALGDMDFKVAGTAKGVTGLQMDIKTTGITYEIMREAFAQARAGRLFILDKMNEVISAPRPELSIYAPRIMTIQIPVDKIGALIGPGGKTIRNICETTGAQIDIEDDGRVFITTPDGAAARQAISMIEGLTREAKVGDIFLGKVVSIKPFGAFVNILPGKDGMVHVSELDEKRVENVEDVVSLGDEINVMVIDIDRTTGKISLSRRAVLTGETPEERKAAGAAPRPRPREEQRGGRDEPRSLRDELRGPRREGDRPRPRRRDD</sequence>
<evidence type="ECO:0000255" key="1">
    <source>
        <dbReference type="HAMAP-Rule" id="MF_01595"/>
    </source>
</evidence>
<evidence type="ECO:0000256" key="2">
    <source>
        <dbReference type="SAM" id="MobiDB-lite"/>
    </source>
</evidence>
<dbReference type="EC" id="2.7.7.8" evidence="1"/>
<dbReference type="EMBL" id="CP001364">
    <property type="protein sequence ID" value="ACM53605.1"/>
    <property type="molecule type" value="Genomic_DNA"/>
</dbReference>
<dbReference type="SMR" id="B9LH03"/>
<dbReference type="KEGG" id="chl:Chy400_2208"/>
<dbReference type="HOGENOM" id="CLU_004217_2_2_0"/>
<dbReference type="OrthoDB" id="9804305at2"/>
<dbReference type="GO" id="GO:0005829">
    <property type="term" value="C:cytosol"/>
    <property type="evidence" value="ECO:0007669"/>
    <property type="project" value="TreeGrafter"/>
</dbReference>
<dbReference type="GO" id="GO:0000175">
    <property type="term" value="F:3'-5'-RNA exonuclease activity"/>
    <property type="evidence" value="ECO:0007669"/>
    <property type="project" value="TreeGrafter"/>
</dbReference>
<dbReference type="GO" id="GO:0000287">
    <property type="term" value="F:magnesium ion binding"/>
    <property type="evidence" value="ECO:0007669"/>
    <property type="project" value="UniProtKB-UniRule"/>
</dbReference>
<dbReference type="GO" id="GO:0004654">
    <property type="term" value="F:polyribonucleotide nucleotidyltransferase activity"/>
    <property type="evidence" value="ECO:0007669"/>
    <property type="project" value="UniProtKB-UniRule"/>
</dbReference>
<dbReference type="GO" id="GO:0003723">
    <property type="term" value="F:RNA binding"/>
    <property type="evidence" value="ECO:0007669"/>
    <property type="project" value="UniProtKB-UniRule"/>
</dbReference>
<dbReference type="GO" id="GO:0006402">
    <property type="term" value="P:mRNA catabolic process"/>
    <property type="evidence" value="ECO:0007669"/>
    <property type="project" value="UniProtKB-UniRule"/>
</dbReference>
<dbReference type="GO" id="GO:0006396">
    <property type="term" value="P:RNA processing"/>
    <property type="evidence" value="ECO:0007669"/>
    <property type="project" value="InterPro"/>
</dbReference>
<dbReference type="CDD" id="cd02393">
    <property type="entry name" value="KH-I_PNPase"/>
    <property type="match status" value="1"/>
</dbReference>
<dbReference type="CDD" id="cd11363">
    <property type="entry name" value="RNase_PH_PNPase_1"/>
    <property type="match status" value="1"/>
</dbReference>
<dbReference type="CDD" id="cd11364">
    <property type="entry name" value="RNase_PH_PNPase_2"/>
    <property type="match status" value="1"/>
</dbReference>
<dbReference type="CDD" id="cd04472">
    <property type="entry name" value="S1_PNPase"/>
    <property type="match status" value="1"/>
</dbReference>
<dbReference type="FunFam" id="3.30.1370.10:FF:000001">
    <property type="entry name" value="Polyribonucleotide nucleotidyltransferase"/>
    <property type="match status" value="1"/>
</dbReference>
<dbReference type="FunFam" id="3.30.230.70:FF:000001">
    <property type="entry name" value="Polyribonucleotide nucleotidyltransferase"/>
    <property type="match status" value="1"/>
</dbReference>
<dbReference type="FunFam" id="3.30.230.70:FF:000002">
    <property type="entry name" value="Polyribonucleotide nucleotidyltransferase"/>
    <property type="match status" value="1"/>
</dbReference>
<dbReference type="FunFam" id="2.40.50.140:FF:000189">
    <property type="entry name" value="Polyribonucleotide nucleotidyltransferase, putative"/>
    <property type="match status" value="1"/>
</dbReference>
<dbReference type="Gene3D" id="3.30.230.70">
    <property type="entry name" value="GHMP Kinase, N-terminal domain"/>
    <property type="match status" value="2"/>
</dbReference>
<dbReference type="Gene3D" id="3.30.1370.10">
    <property type="entry name" value="K Homology domain, type 1"/>
    <property type="match status" value="1"/>
</dbReference>
<dbReference type="Gene3D" id="2.40.50.140">
    <property type="entry name" value="Nucleic acid-binding proteins"/>
    <property type="match status" value="1"/>
</dbReference>
<dbReference type="HAMAP" id="MF_01595">
    <property type="entry name" value="PNPase"/>
    <property type="match status" value="1"/>
</dbReference>
<dbReference type="InterPro" id="IPR001247">
    <property type="entry name" value="ExoRNase_PH_dom1"/>
</dbReference>
<dbReference type="InterPro" id="IPR015847">
    <property type="entry name" value="ExoRNase_PH_dom2"/>
</dbReference>
<dbReference type="InterPro" id="IPR036345">
    <property type="entry name" value="ExoRNase_PH_dom2_sf"/>
</dbReference>
<dbReference type="InterPro" id="IPR004087">
    <property type="entry name" value="KH_dom"/>
</dbReference>
<dbReference type="InterPro" id="IPR004088">
    <property type="entry name" value="KH_dom_type_1"/>
</dbReference>
<dbReference type="InterPro" id="IPR036612">
    <property type="entry name" value="KH_dom_type_1_sf"/>
</dbReference>
<dbReference type="InterPro" id="IPR012340">
    <property type="entry name" value="NA-bd_OB-fold"/>
</dbReference>
<dbReference type="InterPro" id="IPR012162">
    <property type="entry name" value="PNPase"/>
</dbReference>
<dbReference type="InterPro" id="IPR027408">
    <property type="entry name" value="PNPase/RNase_PH_dom_sf"/>
</dbReference>
<dbReference type="InterPro" id="IPR015848">
    <property type="entry name" value="PNPase_PH_RNA-bd_bac/org-type"/>
</dbReference>
<dbReference type="InterPro" id="IPR036456">
    <property type="entry name" value="PNPase_PH_RNA-bd_sf"/>
</dbReference>
<dbReference type="InterPro" id="IPR020568">
    <property type="entry name" value="Ribosomal_Su5_D2-typ_SF"/>
</dbReference>
<dbReference type="InterPro" id="IPR003029">
    <property type="entry name" value="S1_domain"/>
</dbReference>
<dbReference type="NCBIfam" id="TIGR03591">
    <property type="entry name" value="polynuc_phos"/>
    <property type="match status" value="1"/>
</dbReference>
<dbReference type="NCBIfam" id="NF008805">
    <property type="entry name" value="PRK11824.1"/>
    <property type="match status" value="1"/>
</dbReference>
<dbReference type="PANTHER" id="PTHR11252">
    <property type="entry name" value="POLYRIBONUCLEOTIDE NUCLEOTIDYLTRANSFERASE"/>
    <property type="match status" value="1"/>
</dbReference>
<dbReference type="PANTHER" id="PTHR11252:SF0">
    <property type="entry name" value="POLYRIBONUCLEOTIDE NUCLEOTIDYLTRANSFERASE 1, MITOCHONDRIAL"/>
    <property type="match status" value="1"/>
</dbReference>
<dbReference type="Pfam" id="PF00013">
    <property type="entry name" value="KH_1"/>
    <property type="match status" value="1"/>
</dbReference>
<dbReference type="Pfam" id="PF03726">
    <property type="entry name" value="PNPase"/>
    <property type="match status" value="1"/>
</dbReference>
<dbReference type="Pfam" id="PF01138">
    <property type="entry name" value="RNase_PH"/>
    <property type="match status" value="2"/>
</dbReference>
<dbReference type="Pfam" id="PF03725">
    <property type="entry name" value="RNase_PH_C"/>
    <property type="match status" value="2"/>
</dbReference>
<dbReference type="Pfam" id="PF00575">
    <property type="entry name" value="S1"/>
    <property type="match status" value="1"/>
</dbReference>
<dbReference type="PIRSF" id="PIRSF005499">
    <property type="entry name" value="PNPase"/>
    <property type="match status" value="1"/>
</dbReference>
<dbReference type="SMART" id="SM00322">
    <property type="entry name" value="KH"/>
    <property type="match status" value="1"/>
</dbReference>
<dbReference type="SMART" id="SM00316">
    <property type="entry name" value="S1"/>
    <property type="match status" value="1"/>
</dbReference>
<dbReference type="SUPFAM" id="SSF54791">
    <property type="entry name" value="Eukaryotic type KH-domain (KH-domain type I)"/>
    <property type="match status" value="1"/>
</dbReference>
<dbReference type="SUPFAM" id="SSF50249">
    <property type="entry name" value="Nucleic acid-binding proteins"/>
    <property type="match status" value="1"/>
</dbReference>
<dbReference type="SUPFAM" id="SSF46915">
    <property type="entry name" value="Polynucleotide phosphorylase/guanosine pentaphosphate synthase (PNPase/GPSI), domain 3"/>
    <property type="match status" value="1"/>
</dbReference>
<dbReference type="SUPFAM" id="SSF55666">
    <property type="entry name" value="Ribonuclease PH domain 2-like"/>
    <property type="match status" value="2"/>
</dbReference>
<dbReference type="SUPFAM" id="SSF54211">
    <property type="entry name" value="Ribosomal protein S5 domain 2-like"/>
    <property type="match status" value="2"/>
</dbReference>
<dbReference type="PROSITE" id="PS50084">
    <property type="entry name" value="KH_TYPE_1"/>
    <property type="match status" value="1"/>
</dbReference>
<dbReference type="PROSITE" id="PS50126">
    <property type="entry name" value="S1"/>
    <property type="match status" value="1"/>
</dbReference>
<name>PNP_CHLSY</name>
<organism>
    <name type="scientific">Chloroflexus aurantiacus (strain ATCC 29364 / DSM 637 / Y-400-fl)</name>
    <dbReference type="NCBI Taxonomy" id="480224"/>
    <lineage>
        <taxon>Bacteria</taxon>
        <taxon>Bacillati</taxon>
        <taxon>Chloroflexota</taxon>
        <taxon>Chloroflexia</taxon>
        <taxon>Chloroflexales</taxon>
        <taxon>Chloroflexineae</taxon>
        <taxon>Chloroflexaceae</taxon>
        <taxon>Chloroflexus</taxon>
    </lineage>
</organism>
<gene>
    <name evidence="1" type="primary">pnp</name>
    <name type="ordered locus">Chy400_2208</name>
</gene>
<proteinExistence type="inferred from homology"/>
<accession>B9LH03</accession>